<keyword id="KW-0002">3D-structure</keyword>
<keyword id="KW-0007">Acetylation</keyword>
<keyword id="KW-0025">Alternative splicing</keyword>
<keyword id="KW-0131">Cell cycle</keyword>
<keyword id="KW-0132">Cell division</keyword>
<keyword id="KW-0137">Centromere</keyword>
<keyword id="KW-0158">Chromosome</keyword>
<keyword id="KW-0227">DNA damage</keyword>
<keyword id="KW-0234">DNA repair</keyword>
<keyword id="KW-0238">DNA-binding</keyword>
<keyword id="KW-0995">Kinetochore</keyword>
<keyword id="KW-0498">Mitosis</keyword>
<keyword id="KW-0539">Nucleus</keyword>
<keyword id="KW-1267">Proteomics identification</keyword>
<keyword id="KW-1185">Reference proteome</keyword>
<gene>
    <name type="primary">CENPX</name>
    <name type="synonym">FAAP10</name>
    <name evidence="7 8" type="synonym">MHF2</name>
    <name type="synonym">STRA13</name>
</gene>
<proteinExistence type="evidence at protein level"/>
<comment type="function">
    <text evidence="1 2 3">DNA-binding component of the Fanconi anemia (FA) core complex. Required for the normal activation of the FA pathway, leading to monoubiquitination of the FANCI-FANCD2 complex in response to DNA damage, cellular resistance to DNA cross-linking drugs, and prevention of chromosomal breakage (PubMed:20347428, PubMed:20347429). In complex with CENPS (MHF heterodimer), crucial cofactor for FANCM in both binding and ATP-dependent remodeling of DNA. Stabilizes FANCM. In complex with CENPS and FANCM (but not other FANC proteins), rapidly recruited to blocked forks and promotes gene conversion at blocked replication forks (PubMed:20347428, PubMed:20347429). In complex with CENPS, CENPT and CENPW (CENP-T-W-S-X heterotetramer), involved in the formation of a functional kinetochore outer plate, which is essential for kinetochore-microtubule attachment and faithful mitotic progression (PubMed:19620631). As a component of MHF and CENP-T-W-S-X complexes, binds DNA and bends it to form a nucleosome-like structure (PubMed:20347428, PubMed:20347429). DNA-binding function is fulfilled in the presence of CENPS, with the following preference for DNA substates: Holliday junction &gt; double-stranded &gt; splay arm &gt; single-stranded. Does not bind DNA on its own (PubMed:20347429).</text>
</comment>
<comment type="subunit">
    <text evidence="1 2 3 4 5">Heterodimer with CENPX, sometimes called MHF; this interaction stabilizes both partners (PubMed:19620631, PubMed:20347428, PubMed:20347429, PubMed:24522885). MHF heterodimers can assemble to form tetrameric structures (PubMed:22304917). MHF also coassemble with CENPT-CENPW heterodimers at centromeres to form the tetrameric CENP-T-W-S-X complex (PubMed:22304917, PubMed:24522885). Forms a discrete complex with FANCM and CENPX, called FANCM-MHF; this interaction, probably mediated by direct binding between CENPS and FANCM, leads to synergistic activation of double-stranded DNA binding and strongly stimulates FANCM-mediated DNA remodeling (PubMed:20347428, PubMed:20347429). Recruited by FANCM to the Fanconi anemia (FA) core complex, which consists of CENPS, CENPX, FANCA, FANCB, FANCC, FANCE, FANCF, FANCG, FANCL, FANCM, FAAP24 and FAAP100. The FA core complex associates with Bloom syndrome (BLM) complex, which consists of at least BLM, DNA topoisomerase 3-alpha (TOP3A), RMI1/BLAP75, RPA1/RPA70 and RPA2/RPA32. The super complex between FA and BLM is called BRAFT (PubMed:20347428, PubMed:20347429).</text>
</comment>
<comment type="interaction">
    <interactant intactId="EBI-5529694">
        <id>A8MT69</id>
    </interactant>
    <interactant intactId="EBI-5529649">
        <id>Q8N2Z9</id>
        <label>CENPS</label>
    </interactant>
    <organismsDiffer>false</organismsDiffer>
    <experiments>8</experiments>
</comment>
<comment type="interaction">
    <interactant intactId="EBI-5529694">
        <id>A8MT69</id>
    </interactant>
    <interactant intactId="EBI-307352">
        <id>Q04864</id>
        <label>REL</label>
    </interactant>
    <organismsDiffer>false</organismsDiffer>
    <experiments>3</experiments>
</comment>
<comment type="interaction">
    <interactant intactId="EBI-5529694">
        <id>A8MT69</id>
    </interactant>
    <interactant intactId="EBI-2130429">
        <id>Q9BYV2</id>
        <label>TRIM54</label>
    </interactant>
    <organismsDiffer>false</organismsDiffer>
    <experiments>3</experiments>
</comment>
<comment type="interaction">
    <interactant intactId="EBI-13128870">
        <id>A8MT69-2</id>
    </interactant>
    <interactant intactId="EBI-2130429">
        <id>Q9BYV2</id>
        <label>TRIM54</label>
    </interactant>
    <organismsDiffer>false</organismsDiffer>
    <experiments>3</experiments>
</comment>
<comment type="subcellular location">
    <subcellularLocation>
        <location evidence="1 5">Nucleus</location>
    </subcellularLocation>
    <subcellularLocation>
        <location evidence="1 5">Chromosome</location>
        <location evidence="1 5">Centromere</location>
    </subcellularLocation>
    <subcellularLocation>
        <location evidence="1 5">Chromosome</location>
        <location evidence="1 5">Centromere</location>
        <location evidence="1 5">Kinetochore</location>
    </subcellularLocation>
    <text evidence="1 5">Assembly of CENPS and CENPX and its partner subunits CENPT and CENPW at centromeres occurs through a dynamic exchange mechanism. Although exchange is continuous in the cell cycle, de novo assembly starts principally during mid-late S phase and is complete by G2. CENPX being less stably bound at the kinetochore than CENPS.</text>
</comment>
<comment type="alternative products">
    <event type="alternative splicing"/>
    <isoform>
        <id>A8MT69-1</id>
        <name>1</name>
        <sequence type="displayed"/>
    </isoform>
    <isoform>
        <id>A8MT69-2</id>
        <name>2</name>
        <name>Variant A</name>
        <sequence type="described" ref="VSP_033948"/>
    </isoform>
    <isoform>
        <id>A8MT69-3</id>
        <name>3</name>
        <name>Variant B</name>
        <sequence type="described" ref="VSP_033948 VSP_033949"/>
    </isoform>
</comment>
<comment type="developmental stage">
    <text evidence="5">Expression varies across the cell cycle, with highest levels in S phase (at protein level). No statistically significant changes at the transcript level.</text>
</comment>
<comment type="similarity">
    <text evidence="10">Belongs to the CENP-X/MHF2 family.</text>
</comment>
<protein>
    <recommendedName>
        <fullName>Centromere protein X</fullName>
        <shortName>CENP-X</shortName>
    </recommendedName>
    <alternativeName>
        <fullName evidence="7">FANCM-associated histone fold protein 2</fullName>
    </alternativeName>
    <alternativeName>
        <fullName evidence="8">FANCM-interacting histone fold protein 2</fullName>
    </alternativeName>
    <alternativeName>
        <fullName>Fanconi anemia-associated polypeptide of 10 kDa</fullName>
    </alternativeName>
    <alternativeName>
        <fullName>Retinoic acid-inducible gene D9 protein homolog</fullName>
    </alternativeName>
    <alternativeName>
        <fullName>Stimulated by retinoic acid gene 13 protein homolog</fullName>
    </alternativeName>
</protein>
<feature type="chain" id="PRO_0000337180" description="Centromere protein X">
    <location>
        <begin position="1"/>
        <end position="81"/>
    </location>
</feature>
<feature type="modified residue" description="N-acetylmethionine" evidence="11">
    <location>
        <position position="1"/>
    </location>
</feature>
<feature type="splice variant" id="VSP_033948" description="In isoform 2 and isoform 3." evidence="6 9">
    <location>
        <begin position="30"/>
        <end position="47"/>
    </location>
</feature>
<feature type="splice variant" id="VSP_033949" description="In isoform 3." evidence="6 9">
    <location>
        <begin position="73"/>
        <end position="77"/>
    </location>
</feature>
<feature type="sequence conflict" description="In Ref. 3; AAH09571." evidence="10" ref="3">
    <original>V</original>
    <variation>A</variation>
    <location>
        <position position="65"/>
    </location>
</feature>
<feature type="sequence conflict" description="In Ref. 1; AAB53638." evidence="10" ref="1">
    <original>V</original>
    <variation>L</variation>
    <location>
        <position position="73"/>
    </location>
</feature>
<feature type="helix" evidence="12">
    <location>
        <begin position="12"/>
        <end position="20"/>
    </location>
</feature>
<feature type="strand" evidence="13">
    <location>
        <begin position="28"/>
        <end position="30"/>
    </location>
</feature>
<feature type="helix" evidence="12">
    <location>
        <begin position="32"/>
        <end position="59"/>
    </location>
</feature>
<feature type="strand" evidence="12">
    <location>
        <begin position="63"/>
        <end position="65"/>
    </location>
</feature>
<feature type="helix" evidence="12">
    <location>
        <begin position="67"/>
        <end position="80"/>
    </location>
</feature>
<evidence type="ECO:0000269" key="1">
    <source>
    </source>
</evidence>
<evidence type="ECO:0000269" key="2">
    <source>
    </source>
</evidence>
<evidence type="ECO:0000269" key="3">
    <source>
    </source>
</evidence>
<evidence type="ECO:0000269" key="4">
    <source>
    </source>
</evidence>
<evidence type="ECO:0000269" key="5">
    <source>
    </source>
</evidence>
<evidence type="ECO:0000303" key="6">
    <source>
    </source>
</evidence>
<evidence type="ECO:0000303" key="7">
    <source>
    </source>
</evidence>
<evidence type="ECO:0000303" key="8">
    <source>
    </source>
</evidence>
<evidence type="ECO:0000303" key="9">
    <source ref="1"/>
</evidence>
<evidence type="ECO:0000305" key="10"/>
<evidence type="ECO:0007744" key="11">
    <source>
    </source>
</evidence>
<evidence type="ECO:0007829" key="12">
    <source>
        <dbReference type="PDB" id="4NE3"/>
    </source>
</evidence>
<evidence type="ECO:0007829" key="13">
    <source>
        <dbReference type="PDB" id="7R5S"/>
    </source>
</evidence>
<dbReference type="EMBL" id="U95006">
    <property type="protein sequence ID" value="AAB53638.1"/>
    <property type="molecule type" value="mRNA"/>
</dbReference>
<dbReference type="EMBL" id="U95007">
    <property type="protein sequence ID" value="AAB53639.1"/>
    <property type="molecule type" value="mRNA"/>
</dbReference>
<dbReference type="EMBL" id="AC137723">
    <property type="status" value="NOT_ANNOTATED_CDS"/>
    <property type="molecule type" value="Genomic_DNA"/>
</dbReference>
<dbReference type="EMBL" id="BC009571">
    <property type="protein sequence ID" value="AAH09571.1"/>
    <property type="molecule type" value="mRNA"/>
</dbReference>
<dbReference type="EMBL" id="BC011610">
    <property type="protein sequence ID" value="AAH11610.1"/>
    <property type="molecule type" value="mRNA"/>
</dbReference>
<dbReference type="CCDS" id="CCDS32772.1">
    <molecule id="A8MT69-2"/>
</dbReference>
<dbReference type="CCDS" id="CCDS59302.1">
    <molecule id="A8MT69-3"/>
</dbReference>
<dbReference type="CCDS" id="CCDS59303.1">
    <molecule id="A8MT69-1"/>
</dbReference>
<dbReference type="RefSeq" id="NP_001257935.1">
    <molecule id="A8MT69-1"/>
    <property type="nucleotide sequence ID" value="NM_001271006.2"/>
</dbReference>
<dbReference type="RefSeq" id="NP_001257936.1">
    <molecule id="A8MT69-3"/>
    <property type="nucleotide sequence ID" value="NM_001271007.2"/>
</dbReference>
<dbReference type="RefSeq" id="NP_001317465.1">
    <property type="nucleotide sequence ID" value="NM_001330536.1"/>
</dbReference>
<dbReference type="RefSeq" id="NP_659435.2">
    <molecule id="A8MT69-2"/>
    <property type="nucleotide sequence ID" value="NM_144998.4"/>
</dbReference>
<dbReference type="PDB" id="4DRA">
    <property type="method" value="X-ray"/>
    <property type="resolution" value="2.41 A"/>
    <property type="chains" value="E/F/G/H=1-81"/>
</dbReference>
<dbReference type="PDB" id="4DRB">
    <property type="method" value="X-ray"/>
    <property type="resolution" value="2.63 A"/>
    <property type="chains" value="J/K/L/M/N/O=1-81"/>
</dbReference>
<dbReference type="PDB" id="4E44">
    <property type="method" value="X-ray"/>
    <property type="resolution" value="2.10 A"/>
    <property type="chains" value="B/D=1-81"/>
</dbReference>
<dbReference type="PDB" id="4E45">
    <property type="method" value="X-ray"/>
    <property type="resolution" value="2.00 A"/>
    <property type="chains" value="B/D/G/I/L/N=1-81"/>
</dbReference>
<dbReference type="PDB" id="4NDY">
    <property type="method" value="X-ray"/>
    <property type="resolution" value="7.00 A"/>
    <property type="chains" value="B/D/H/L/M/N/U/V/W/X=8-81"/>
</dbReference>
<dbReference type="PDB" id="4NE1">
    <property type="method" value="X-ray"/>
    <property type="resolution" value="6.50 A"/>
    <property type="chains" value="B/D/H/L/M/N/U/V/W/X/Z/b/d/h/i/j/o/p/q/r=8-81"/>
</dbReference>
<dbReference type="PDB" id="4NE3">
    <property type="method" value="X-ray"/>
    <property type="resolution" value="1.80 A"/>
    <property type="chains" value="B=8-81"/>
</dbReference>
<dbReference type="PDB" id="4NE5">
    <property type="method" value="X-ray"/>
    <property type="resolution" value="2.50 A"/>
    <property type="chains" value="B/D/F/H=8-81"/>
</dbReference>
<dbReference type="PDB" id="4NE6">
    <property type="method" value="X-ray"/>
    <property type="resolution" value="2.10 A"/>
    <property type="chains" value="B/D=8-81"/>
</dbReference>
<dbReference type="PDB" id="7R5S">
    <property type="method" value="EM"/>
    <property type="resolution" value="2.83 A"/>
    <property type="chains" value="X=1-81"/>
</dbReference>
<dbReference type="PDB" id="7XHN">
    <property type="method" value="EM"/>
    <property type="resolution" value="3.71 A"/>
    <property type="chains" value="X=1-81"/>
</dbReference>
<dbReference type="PDB" id="7XHO">
    <property type="method" value="EM"/>
    <property type="resolution" value="3.29 A"/>
    <property type="chains" value="X=1-81"/>
</dbReference>
<dbReference type="PDB" id="7YWX">
    <property type="method" value="EM"/>
    <property type="resolution" value="12.00 A"/>
    <property type="chains" value="X=1-81"/>
</dbReference>
<dbReference type="PDBsum" id="4DRA"/>
<dbReference type="PDBsum" id="4DRB"/>
<dbReference type="PDBsum" id="4E44"/>
<dbReference type="PDBsum" id="4E45"/>
<dbReference type="PDBsum" id="4NDY"/>
<dbReference type="PDBsum" id="4NE1"/>
<dbReference type="PDBsum" id="4NE3"/>
<dbReference type="PDBsum" id="4NE5"/>
<dbReference type="PDBsum" id="4NE6"/>
<dbReference type="PDBsum" id="7R5S"/>
<dbReference type="PDBsum" id="7XHN"/>
<dbReference type="PDBsum" id="7XHO"/>
<dbReference type="PDBsum" id="7YWX"/>
<dbReference type="EMDB" id="EMD-14336"/>
<dbReference type="EMDB" id="EMD-14351"/>
<dbReference type="EMDB" id="EMD-33196"/>
<dbReference type="EMDB" id="EMD-33197"/>
<dbReference type="SMR" id="A8MT69"/>
<dbReference type="BioGRID" id="128376">
    <property type="interactions" value="30"/>
</dbReference>
<dbReference type="ComplexPortal" id="CPX-5646">
    <property type="entry name" value="Kinetochore CCAN complex"/>
</dbReference>
<dbReference type="ComplexPortal" id="CPX-6266">
    <property type="entry name" value="Fanconi anemia FANCM-FAAP24-MHF anchoring complex"/>
</dbReference>
<dbReference type="CORUM" id="A8MT69"/>
<dbReference type="FunCoup" id="A8MT69">
    <property type="interactions" value="565"/>
</dbReference>
<dbReference type="IntAct" id="A8MT69">
    <property type="interactions" value="9"/>
</dbReference>
<dbReference type="MINT" id="A8MT69"/>
<dbReference type="STRING" id="9606.ENSP00000464357"/>
<dbReference type="GlyGen" id="A8MT69">
    <property type="glycosylation" value="1 site, 1 O-linked glycan (1 site)"/>
</dbReference>
<dbReference type="iPTMnet" id="A8MT69"/>
<dbReference type="PhosphoSitePlus" id="A8MT69"/>
<dbReference type="BioMuta" id="CENPX"/>
<dbReference type="jPOST" id="A8MT69"/>
<dbReference type="MassIVE" id="A8MT69"/>
<dbReference type="PaxDb" id="9606-ENSP00000376168"/>
<dbReference type="PeptideAtlas" id="A8MT69"/>
<dbReference type="ProteomicsDB" id="1998">
    <molecule id="A8MT69-1"/>
</dbReference>
<dbReference type="ProteomicsDB" id="1999">
    <molecule id="A8MT69-2"/>
</dbReference>
<dbReference type="ProteomicsDB" id="2000">
    <molecule id="A8MT69-3"/>
</dbReference>
<dbReference type="Pumba" id="A8MT69"/>
<dbReference type="TopDownProteomics" id="A8MT69-1">
    <molecule id="A8MT69-1"/>
</dbReference>
<dbReference type="TopDownProteomics" id="A8MT69-2">
    <molecule id="A8MT69-2"/>
</dbReference>
<dbReference type="Antibodypedia" id="32957">
    <property type="antibodies" value="67 antibodies from 17 providers"/>
</dbReference>
<dbReference type="DNASU" id="201254"/>
<dbReference type="Ensembl" id="ENST00000306704.10">
    <molecule id="A8MT69-2"/>
    <property type="protein sequence ID" value="ENSP00000302951.6"/>
    <property type="gene ID" value="ENSG00000169689.15"/>
</dbReference>
<dbReference type="Ensembl" id="ENST00000392359.8">
    <molecule id="A8MT69-1"/>
    <property type="protein sequence ID" value="ENSP00000376168.3"/>
    <property type="gene ID" value="ENSG00000169689.15"/>
</dbReference>
<dbReference type="Ensembl" id="ENST00000580435.5">
    <molecule id="A8MT69-3"/>
    <property type="protein sequence ID" value="ENSP00000462015.1"/>
    <property type="gene ID" value="ENSG00000169689.15"/>
</dbReference>
<dbReference type="GeneID" id="201254"/>
<dbReference type="KEGG" id="hsa:201254"/>
<dbReference type="MANE-Select" id="ENST00000392359.8">
    <property type="protein sequence ID" value="ENSP00000376168.3"/>
    <property type="RefSeq nucleotide sequence ID" value="NM_001271006.2"/>
    <property type="RefSeq protein sequence ID" value="NP_001257935.1"/>
</dbReference>
<dbReference type="UCSC" id="uc002kdc.5">
    <molecule id="A8MT69-1"/>
    <property type="organism name" value="human"/>
</dbReference>
<dbReference type="AGR" id="HGNC:11422"/>
<dbReference type="CTD" id="201254"/>
<dbReference type="DisGeNET" id="201254"/>
<dbReference type="GeneCards" id="CENPX"/>
<dbReference type="HGNC" id="HGNC:11422">
    <property type="gene designation" value="CENPX"/>
</dbReference>
<dbReference type="HPA" id="ENSG00000169689">
    <property type="expression patterns" value="Low tissue specificity"/>
</dbReference>
<dbReference type="MIM" id="615128">
    <property type="type" value="gene"/>
</dbReference>
<dbReference type="neXtProt" id="NX_A8MT69"/>
<dbReference type="OpenTargets" id="ENSG00000169689"/>
<dbReference type="PharmGKB" id="PA36223"/>
<dbReference type="VEuPathDB" id="HostDB:ENSG00000169689"/>
<dbReference type="eggNOG" id="ENOG502S98G">
    <property type="taxonomic scope" value="Eukaryota"/>
</dbReference>
<dbReference type="GeneTree" id="ENSGT00390000002725"/>
<dbReference type="HOGENOM" id="CLU_175684_0_0_1"/>
<dbReference type="InParanoid" id="A8MT69"/>
<dbReference type="OMA" id="FKAKTIQ"/>
<dbReference type="OrthoDB" id="2500381at2759"/>
<dbReference type="PAN-GO" id="A8MT69">
    <property type="GO annotations" value="4 GO annotations based on evolutionary models"/>
</dbReference>
<dbReference type="PhylomeDB" id="A8MT69"/>
<dbReference type="PathwayCommons" id="A8MT69"/>
<dbReference type="Reactome" id="R-HSA-606279">
    <property type="pathway name" value="Deposition of new CENPA-containing nucleosomes at the centromere"/>
</dbReference>
<dbReference type="Reactome" id="R-HSA-6783310">
    <property type="pathway name" value="Fanconi Anemia Pathway"/>
</dbReference>
<dbReference type="Reactome" id="R-HSA-9833482">
    <property type="pathway name" value="PKR-mediated signaling"/>
</dbReference>
<dbReference type="SignaLink" id="A8MT69"/>
<dbReference type="SIGNOR" id="A8MT69"/>
<dbReference type="BioGRID-ORCS" id="201254">
    <property type="hits" value="134 hits in 1154 CRISPR screens"/>
</dbReference>
<dbReference type="ChiTaRS" id="CENPX">
    <property type="organism name" value="human"/>
</dbReference>
<dbReference type="EvolutionaryTrace" id="A8MT69"/>
<dbReference type="GenomeRNAi" id="201254"/>
<dbReference type="Pharos" id="A8MT69">
    <property type="development level" value="Tbio"/>
</dbReference>
<dbReference type="PRO" id="PR:A8MT69"/>
<dbReference type="Proteomes" id="UP000005640">
    <property type="component" value="Chromosome 17"/>
</dbReference>
<dbReference type="RNAct" id="A8MT69">
    <property type="molecule type" value="protein"/>
</dbReference>
<dbReference type="Bgee" id="ENSG00000169689">
    <property type="expression patterns" value="Expressed in mucosa of transverse colon and 192 other cell types or tissues"/>
</dbReference>
<dbReference type="ExpressionAtlas" id="A8MT69">
    <property type="expression patterns" value="baseline and differential"/>
</dbReference>
<dbReference type="GO" id="GO:0000785">
    <property type="term" value="C:chromatin"/>
    <property type="evidence" value="ECO:0000314"/>
    <property type="project" value="ComplexPortal"/>
</dbReference>
<dbReference type="GO" id="GO:0005829">
    <property type="term" value="C:cytosol"/>
    <property type="evidence" value="ECO:0000304"/>
    <property type="project" value="Reactome"/>
</dbReference>
<dbReference type="GO" id="GO:0071821">
    <property type="term" value="C:FANCM-MHF complex"/>
    <property type="evidence" value="ECO:0000314"/>
    <property type="project" value="UniProtKB"/>
</dbReference>
<dbReference type="GO" id="GO:0043240">
    <property type="term" value="C:Fanconi anaemia nuclear complex"/>
    <property type="evidence" value="ECO:0000314"/>
    <property type="project" value="UniProtKB"/>
</dbReference>
<dbReference type="GO" id="GO:0000939">
    <property type="term" value="C:inner kinetochore"/>
    <property type="evidence" value="ECO:0000353"/>
    <property type="project" value="ComplexPortal"/>
</dbReference>
<dbReference type="GO" id="GO:0005654">
    <property type="term" value="C:nucleoplasm"/>
    <property type="evidence" value="ECO:0000304"/>
    <property type="project" value="Reactome"/>
</dbReference>
<dbReference type="GO" id="GO:0005634">
    <property type="term" value="C:nucleus"/>
    <property type="evidence" value="ECO:0000303"/>
    <property type="project" value="ComplexPortal"/>
</dbReference>
<dbReference type="GO" id="GO:0003677">
    <property type="term" value="F:DNA binding"/>
    <property type="evidence" value="ECO:0000314"/>
    <property type="project" value="UniProtKB"/>
</dbReference>
<dbReference type="GO" id="GO:0051301">
    <property type="term" value="P:cell division"/>
    <property type="evidence" value="ECO:0007669"/>
    <property type="project" value="UniProtKB-KW"/>
</dbReference>
<dbReference type="GO" id="GO:0007059">
    <property type="term" value="P:chromosome segregation"/>
    <property type="evidence" value="ECO:0000303"/>
    <property type="project" value="ComplexPortal"/>
</dbReference>
<dbReference type="GO" id="GO:0036297">
    <property type="term" value="P:interstrand cross-link repair"/>
    <property type="evidence" value="ECO:0000314"/>
    <property type="project" value="ComplexPortal"/>
</dbReference>
<dbReference type="GO" id="GO:0051382">
    <property type="term" value="P:kinetochore assembly"/>
    <property type="evidence" value="ECO:0007669"/>
    <property type="project" value="InterPro"/>
</dbReference>
<dbReference type="GO" id="GO:0031398">
    <property type="term" value="P:positive regulation of protein ubiquitination"/>
    <property type="evidence" value="ECO:0000304"/>
    <property type="project" value="UniProtKB"/>
</dbReference>
<dbReference type="GO" id="GO:0031297">
    <property type="term" value="P:replication fork processing"/>
    <property type="evidence" value="ECO:0000315"/>
    <property type="project" value="UniProtKB"/>
</dbReference>
<dbReference type="GO" id="GO:0000712">
    <property type="term" value="P:resolution of meiotic recombination intermediates"/>
    <property type="evidence" value="ECO:0000315"/>
    <property type="project" value="UniProtKB"/>
</dbReference>
<dbReference type="CDD" id="cd22921">
    <property type="entry name" value="HFD_CENP-X"/>
    <property type="match status" value="1"/>
</dbReference>
<dbReference type="FunFam" id="1.20.5.4980:FF:000001">
    <property type="entry name" value="Centromere protein X"/>
    <property type="match status" value="1"/>
</dbReference>
<dbReference type="Gene3D" id="1.20.5.4980">
    <property type="match status" value="1"/>
</dbReference>
<dbReference type="Gene3D" id="6.10.130.30">
    <property type="match status" value="1"/>
</dbReference>
<dbReference type="IDEAL" id="IID00424"/>
<dbReference type="InterPro" id="IPR018552">
    <property type="entry name" value="CENP-X"/>
</dbReference>
<dbReference type="PANTHER" id="PTHR28680">
    <property type="entry name" value="CENTROMERE PROTEIN X"/>
    <property type="match status" value="1"/>
</dbReference>
<dbReference type="PANTHER" id="PTHR28680:SF1">
    <property type="entry name" value="CENTROMERE PROTEIN X"/>
    <property type="match status" value="1"/>
</dbReference>
<dbReference type="Pfam" id="PF09415">
    <property type="entry name" value="CENP-X"/>
    <property type="match status" value="1"/>
</dbReference>
<reference key="1">
    <citation type="submission" date="1997-03" db="EMBL/GenBank/DDBJ databases">
        <title>Nucleotide sequence of two human D9 transcripts.</title>
        <authorList>
            <person name="Scott L.M."/>
            <person name="Collins S.J."/>
        </authorList>
    </citation>
    <scope>NUCLEOTIDE SEQUENCE [MRNA] (ISOFORMS 2 AND 3)</scope>
</reference>
<reference key="2">
    <citation type="journal article" date="2006" name="Nature">
        <title>DNA sequence of human chromosome 17 and analysis of rearrangement in the human lineage.</title>
        <authorList>
            <person name="Zody M.C."/>
            <person name="Garber M."/>
            <person name="Adams D.J."/>
            <person name="Sharpe T."/>
            <person name="Harrow J."/>
            <person name="Lupski J.R."/>
            <person name="Nicholson C."/>
            <person name="Searle S.M."/>
            <person name="Wilming L."/>
            <person name="Young S.K."/>
            <person name="Abouelleil A."/>
            <person name="Allen N.R."/>
            <person name="Bi W."/>
            <person name="Bloom T."/>
            <person name="Borowsky M.L."/>
            <person name="Bugalter B.E."/>
            <person name="Butler J."/>
            <person name="Chang J.L."/>
            <person name="Chen C.-K."/>
            <person name="Cook A."/>
            <person name="Corum B."/>
            <person name="Cuomo C.A."/>
            <person name="de Jong P.J."/>
            <person name="DeCaprio D."/>
            <person name="Dewar K."/>
            <person name="FitzGerald M."/>
            <person name="Gilbert J."/>
            <person name="Gibson R."/>
            <person name="Gnerre S."/>
            <person name="Goldstein S."/>
            <person name="Grafham D.V."/>
            <person name="Grocock R."/>
            <person name="Hafez N."/>
            <person name="Hagopian D.S."/>
            <person name="Hart E."/>
            <person name="Norman C.H."/>
            <person name="Humphray S."/>
            <person name="Jaffe D.B."/>
            <person name="Jones M."/>
            <person name="Kamal M."/>
            <person name="Khodiyar V.K."/>
            <person name="LaButti K."/>
            <person name="Laird G."/>
            <person name="Lehoczky J."/>
            <person name="Liu X."/>
            <person name="Lokyitsang T."/>
            <person name="Loveland J."/>
            <person name="Lui A."/>
            <person name="Macdonald P."/>
            <person name="Major J.E."/>
            <person name="Matthews L."/>
            <person name="Mauceli E."/>
            <person name="McCarroll S.A."/>
            <person name="Mihalev A.H."/>
            <person name="Mudge J."/>
            <person name="Nguyen C."/>
            <person name="Nicol R."/>
            <person name="O'Leary S.B."/>
            <person name="Osoegawa K."/>
            <person name="Schwartz D.C."/>
            <person name="Shaw-Smith C."/>
            <person name="Stankiewicz P."/>
            <person name="Steward C."/>
            <person name="Swarbreck D."/>
            <person name="Venkataraman V."/>
            <person name="Whittaker C.A."/>
            <person name="Yang X."/>
            <person name="Zimmer A.R."/>
            <person name="Bradley A."/>
            <person name="Hubbard T."/>
            <person name="Birren B.W."/>
            <person name="Rogers J."/>
            <person name="Lander E.S."/>
            <person name="Nusbaum C."/>
        </authorList>
    </citation>
    <scope>NUCLEOTIDE SEQUENCE [LARGE SCALE GENOMIC DNA]</scope>
</reference>
<reference key="3">
    <citation type="journal article" date="2004" name="Genome Res.">
        <title>The status, quality, and expansion of the NIH full-length cDNA project: the Mammalian Gene Collection (MGC).</title>
        <authorList>
            <consortium name="The MGC Project Team"/>
        </authorList>
    </citation>
    <scope>NUCLEOTIDE SEQUENCE [LARGE SCALE MRNA] (ISOFORM 2)</scope>
    <scope>NUCLEOTIDE SEQUENCE [LARGE SCALE MRNA] OF 2-81 (ISOFORM 3)</scope>
    <source>
        <tissue>Placenta</tissue>
        <tissue>Skin</tissue>
    </source>
</reference>
<reference key="4">
    <citation type="journal article" date="2009" name="J. Cell Biol.">
        <title>The CENP-S complex is essential for the stable assembly of outer kinetochore structure.</title>
        <authorList>
            <person name="Amano M."/>
            <person name="Suzuki A."/>
            <person name="Hori T."/>
            <person name="Backer C."/>
            <person name="Okawa K."/>
            <person name="Cheeseman I.M."/>
            <person name="Fukagawa T."/>
        </authorList>
    </citation>
    <scope>FUNCTION</scope>
    <scope>IDENTIFICATION BY MASS SPECTROMETRY</scope>
    <scope>INTERACTION WITH CENPS</scope>
</reference>
<reference key="5">
    <citation type="journal article" date="2010" name="Mol. Cell">
        <title>A histone-fold complex and FANCM form a conserved DNA-remodeling complex to maintain genome stability.</title>
        <authorList>
            <person name="Yan Z."/>
            <person name="Delannoy M."/>
            <person name="Ling C."/>
            <person name="Daee D."/>
            <person name="Osman F."/>
            <person name="Muniandy P.A."/>
            <person name="Shen X."/>
            <person name="Oostra A.B."/>
            <person name="Du H."/>
            <person name="Steltenpool J."/>
            <person name="Lin T."/>
            <person name="Schuster B."/>
            <person name="Decaillet C."/>
            <person name="Stasiak A."/>
            <person name="Stasiak A.Z."/>
            <person name="Stone S."/>
            <person name="Hoatlin M.E."/>
            <person name="Schindler D."/>
            <person name="Woodcock C.L."/>
            <person name="Joenje H."/>
            <person name="Sen R."/>
            <person name="de Winter J.P."/>
            <person name="Li L."/>
            <person name="Seidman M.M."/>
            <person name="Whitby M.C."/>
            <person name="Myung K."/>
            <person name="Constantinousend A."/>
            <person name="Wang W."/>
        </authorList>
    </citation>
    <scope>IDENTIFICATION BY MASS SPECTROMETRY</scope>
    <scope>IDENTIFICATION IN THE FA CORE COMPLEX</scope>
    <scope>IDENTIFICATION IN THE BRAFT COMPLEX</scope>
    <scope>INTERACTION WITH FANCM AND CENPS</scope>
    <scope>SUBCELLULAR LOCATION</scope>
    <scope>DNA-BINDING</scope>
    <scope>FUNCTION</scope>
</reference>
<reference key="6">
    <citation type="journal article" date="2010" name="Mol. Cell">
        <title>MHF1-MHF2, a histone-fold-containing protein complex, participates in the Fanconi anemia pathway via FANCM.</title>
        <authorList>
            <person name="Singh T.R."/>
            <person name="Saro D."/>
            <person name="Ali A.M."/>
            <person name="Zheng X.-F."/>
            <person name="Du C."/>
            <person name="Killen M.W."/>
            <person name="Sachpatzidis A."/>
            <person name="Wahengbam K."/>
            <person name="Pierce A.J."/>
            <person name="Xiong Y."/>
            <person name="Sung P."/>
            <person name="Meetei A.R."/>
        </authorList>
    </citation>
    <scope>IDENTIFICATION BY MASS SPECTROMETRY</scope>
    <scope>IDENTIFICATION IN THE FA CORE COMPLEX</scope>
    <scope>INTERACTION WITH FANCM AND CENPS</scope>
    <scope>SUBCELLULAR LOCATION</scope>
    <scope>DNA-BINDING</scope>
    <scope>FUNCTION</scope>
</reference>
<reference key="7">
    <citation type="journal article" date="2012" name="Cell">
        <title>CENP-T-W-S-X forms a unique centromeric chromatin structure with a histone-like fold.</title>
        <authorList>
            <person name="Nishino T."/>
            <person name="Takeuchi K."/>
            <person name="Gascoigne K.E."/>
            <person name="Suzuki A."/>
            <person name="Hori T."/>
            <person name="Oyama T."/>
            <person name="Morikawa K."/>
            <person name="Cheeseman I.M."/>
            <person name="Fukagawa T."/>
        </authorList>
    </citation>
    <scope>INTERACTION WITH CENPS; CENPT AND CEPNW</scope>
</reference>
<reference key="8">
    <citation type="journal article" date="2012" name="Proc. Natl. Acad. Sci. U.S.A.">
        <title>N-terminal acetylome analyses and functional insights of the N-terminal acetyltransferase NatB.</title>
        <authorList>
            <person name="Van Damme P."/>
            <person name="Lasa M."/>
            <person name="Polevoda B."/>
            <person name="Gazquez C."/>
            <person name="Elosegui-Artola A."/>
            <person name="Kim D.S."/>
            <person name="De Juan-Pardo E."/>
            <person name="Demeyer K."/>
            <person name="Hole K."/>
            <person name="Larrea E."/>
            <person name="Timmerman E."/>
            <person name="Prieto J."/>
            <person name="Arnesen T."/>
            <person name="Sherman F."/>
            <person name="Gevaert K."/>
            <person name="Aldabe R."/>
        </authorList>
    </citation>
    <scope>ACETYLATION [LARGE SCALE ANALYSIS] AT MET-1</scope>
    <scope>IDENTIFICATION BY MASS SPECTROMETRY [LARGE SCALE ANALYSIS]</scope>
</reference>
<reference key="9">
    <citation type="journal article" date="2014" name="Open Biol.">
        <title>A CENP-S/X complex assembles at the centromere in S and G2 phases of the human cell cycle.</title>
        <authorList>
            <person name="Dornblut C."/>
            <person name="Quinn N."/>
            <person name="Monajambashi S."/>
            <person name="Prendergast L."/>
            <person name="van Vuuren C."/>
            <person name="Muench S."/>
            <person name="Deng W."/>
            <person name="Leonhardt H."/>
            <person name="Cardoso M.C."/>
            <person name="Hoischen C."/>
            <person name="Diekmann S."/>
            <person name="Sullivan K.F."/>
        </authorList>
    </citation>
    <scope>IDENTIFICATION IN THE CENP-T-W-S-X COMPLEX</scope>
    <scope>SUBCELLULAR LOCATION</scope>
    <scope>DEVELOPMENTAL STAGE</scope>
</reference>
<sequence>MEGAGAGSGFRKELVSRLLHLHFKDDKTKVSGDALQLMVELLKVFVVEAAVRGVRQAQAEDALRVDVDQLEKVLPQLLLDF</sequence>
<name>CENPX_HUMAN</name>
<accession>A8MT69</accession>
<accession>O00281</accession>
<accession>O00282</accession>
<accession>Q96DD4</accession>
<accession>Q96F51</accession>
<organism>
    <name type="scientific">Homo sapiens</name>
    <name type="common">Human</name>
    <dbReference type="NCBI Taxonomy" id="9606"/>
    <lineage>
        <taxon>Eukaryota</taxon>
        <taxon>Metazoa</taxon>
        <taxon>Chordata</taxon>
        <taxon>Craniata</taxon>
        <taxon>Vertebrata</taxon>
        <taxon>Euteleostomi</taxon>
        <taxon>Mammalia</taxon>
        <taxon>Eutheria</taxon>
        <taxon>Euarchontoglires</taxon>
        <taxon>Primates</taxon>
        <taxon>Haplorrhini</taxon>
        <taxon>Catarrhini</taxon>
        <taxon>Hominidae</taxon>
        <taxon>Homo</taxon>
    </lineage>
</organism>